<sequence>MPRRRSIEPRKILPDPKFGSELLAKFINVLMVDGKKSIAESIVYNALETLAQRSGKDALEAFEIALENVRPTVEVKSRRVGGSTYQVPVEVRPTRRNALAMRWIVEAARKRGDKSMAMRLANELSDAADNKGSAVKKREDVHRMAEANKAFAHYRW</sequence>
<organism>
    <name type="scientific">Glaesserella parasuis serovar 5 (strain SH0165)</name>
    <name type="common">Haemophilus parasuis</name>
    <dbReference type="NCBI Taxonomy" id="557723"/>
    <lineage>
        <taxon>Bacteria</taxon>
        <taxon>Pseudomonadati</taxon>
        <taxon>Pseudomonadota</taxon>
        <taxon>Gammaproteobacteria</taxon>
        <taxon>Pasteurellales</taxon>
        <taxon>Pasteurellaceae</taxon>
        <taxon>Glaesserella</taxon>
    </lineage>
</organism>
<proteinExistence type="inferred from homology"/>
<evidence type="ECO:0000255" key="1">
    <source>
        <dbReference type="HAMAP-Rule" id="MF_00480"/>
    </source>
</evidence>
<evidence type="ECO:0000305" key="2"/>
<reference key="1">
    <citation type="journal article" date="2009" name="J. Bacteriol.">
        <title>Complete genome sequence of Haemophilus parasuis SH0165.</title>
        <authorList>
            <person name="Yue M."/>
            <person name="Yang F."/>
            <person name="Yang J."/>
            <person name="Bei W."/>
            <person name="Cai X."/>
            <person name="Chen L."/>
            <person name="Dong J."/>
            <person name="Zhou R."/>
            <person name="Jin M."/>
            <person name="Jin Q."/>
            <person name="Chen H."/>
        </authorList>
    </citation>
    <scope>NUCLEOTIDE SEQUENCE [LARGE SCALE GENOMIC DNA]</scope>
    <source>
        <strain>SH0165</strain>
    </source>
</reference>
<gene>
    <name evidence="1" type="primary">rpsG</name>
    <name type="ordered locus">HAPS_1967</name>
</gene>
<accession>B8F7Z3</accession>
<protein>
    <recommendedName>
        <fullName evidence="1">Small ribosomal subunit protein uS7</fullName>
    </recommendedName>
    <alternativeName>
        <fullName evidence="2">30S ribosomal protein S7</fullName>
    </alternativeName>
</protein>
<keyword id="KW-1185">Reference proteome</keyword>
<keyword id="KW-0687">Ribonucleoprotein</keyword>
<keyword id="KW-0689">Ribosomal protein</keyword>
<keyword id="KW-0694">RNA-binding</keyword>
<keyword id="KW-0699">rRNA-binding</keyword>
<keyword id="KW-0820">tRNA-binding</keyword>
<comment type="function">
    <text evidence="1">One of the primary rRNA binding proteins, it binds directly to 16S rRNA where it nucleates assembly of the head domain of the 30S subunit. Is located at the subunit interface close to the decoding center, probably blocks exit of the E-site tRNA.</text>
</comment>
<comment type="subunit">
    <text evidence="1">Part of the 30S ribosomal subunit. Contacts proteins S9 and S11.</text>
</comment>
<comment type="similarity">
    <text evidence="1">Belongs to the universal ribosomal protein uS7 family.</text>
</comment>
<dbReference type="EMBL" id="CP001321">
    <property type="protein sequence ID" value="ACL33445.1"/>
    <property type="molecule type" value="Genomic_DNA"/>
</dbReference>
<dbReference type="RefSeq" id="WP_015940004.1">
    <property type="nucleotide sequence ID" value="NC_011852.1"/>
</dbReference>
<dbReference type="SMR" id="B8F7Z3"/>
<dbReference type="STRING" id="557723.HAPS_1967"/>
<dbReference type="GeneID" id="66617881"/>
<dbReference type="KEGG" id="hap:HAPS_1967"/>
<dbReference type="HOGENOM" id="CLU_072226_1_1_6"/>
<dbReference type="Proteomes" id="UP000006743">
    <property type="component" value="Chromosome"/>
</dbReference>
<dbReference type="GO" id="GO:0015935">
    <property type="term" value="C:small ribosomal subunit"/>
    <property type="evidence" value="ECO:0007669"/>
    <property type="project" value="InterPro"/>
</dbReference>
<dbReference type="GO" id="GO:0019843">
    <property type="term" value="F:rRNA binding"/>
    <property type="evidence" value="ECO:0007669"/>
    <property type="project" value="UniProtKB-UniRule"/>
</dbReference>
<dbReference type="GO" id="GO:0003735">
    <property type="term" value="F:structural constituent of ribosome"/>
    <property type="evidence" value="ECO:0007669"/>
    <property type="project" value="InterPro"/>
</dbReference>
<dbReference type="GO" id="GO:0000049">
    <property type="term" value="F:tRNA binding"/>
    <property type="evidence" value="ECO:0007669"/>
    <property type="project" value="UniProtKB-UniRule"/>
</dbReference>
<dbReference type="GO" id="GO:0006412">
    <property type="term" value="P:translation"/>
    <property type="evidence" value="ECO:0007669"/>
    <property type="project" value="UniProtKB-UniRule"/>
</dbReference>
<dbReference type="CDD" id="cd14869">
    <property type="entry name" value="uS7_Bacteria"/>
    <property type="match status" value="1"/>
</dbReference>
<dbReference type="FunFam" id="1.10.455.10:FF:000001">
    <property type="entry name" value="30S ribosomal protein S7"/>
    <property type="match status" value="1"/>
</dbReference>
<dbReference type="Gene3D" id="1.10.455.10">
    <property type="entry name" value="Ribosomal protein S7 domain"/>
    <property type="match status" value="1"/>
</dbReference>
<dbReference type="HAMAP" id="MF_00480_B">
    <property type="entry name" value="Ribosomal_uS7_B"/>
    <property type="match status" value="1"/>
</dbReference>
<dbReference type="InterPro" id="IPR000235">
    <property type="entry name" value="Ribosomal_uS7"/>
</dbReference>
<dbReference type="InterPro" id="IPR005717">
    <property type="entry name" value="Ribosomal_uS7_bac/org-type"/>
</dbReference>
<dbReference type="InterPro" id="IPR020606">
    <property type="entry name" value="Ribosomal_uS7_CS"/>
</dbReference>
<dbReference type="InterPro" id="IPR023798">
    <property type="entry name" value="Ribosomal_uS7_dom"/>
</dbReference>
<dbReference type="InterPro" id="IPR036823">
    <property type="entry name" value="Ribosomal_uS7_dom_sf"/>
</dbReference>
<dbReference type="NCBIfam" id="TIGR01029">
    <property type="entry name" value="rpsG_bact"/>
    <property type="match status" value="1"/>
</dbReference>
<dbReference type="PANTHER" id="PTHR11205">
    <property type="entry name" value="RIBOSOMAL PROTEIN S7"/>
    <property type="match status" value="1"/>
</dbReference>
<dbReference type="Pfam" id="PF00177">
    <property type="entry name" value="Ribosomal_S7"/>
    <property type="match status" value="1"/>
</dbReference>
<dbReference type="PIRSF" id="PIRSF002122">
    <property type="entry name" value="RPS7p_RPS7a_RPS5e_RPS7o"/>
    <property type="match status" value="1"/>
</dbReference>
<dbReference type="SUPFAM" id="SSF47973">
    <property type="entry name" value="Ribosomal protein S7"/>
    <property type="match status" value="1"/>
</dbReference>
<dbReference type="PROSITE" id="PS00052">
    <property type="entry name" value="RIBOSOMAL_S7"/>
    <property type="match status" value="1"/>
</dbReference>
<name>RS7_GLAP5</name>
<feature type="chain" id="PRO_1000135606" description="Small ribosomal subunit protein uS7">
    <location>
        <begin position="1"/>
        <end position="156"/>
    </location>
</feature>